<feature type="chain" id="PRO_0000266976" description="Probable GTP-binding protein EngB">
    <location>
        <begin position="1"/>
        <end position="212"/>
    </location>
</feature>
<feature type="domain" description="EngB-type G" evidence="1">
    <location>
        <begin position="22"/>
        <end position="212"/>
    </location>
</feature>
<feature type="binding site" evidence="1">
    <location>
        <begin position="30"/>
        <end position="37"/>
    </location>
    <ligand>
        <name>GTP</name>
        <dbReference type="ChEBI" id="CHEBI:37565"/>
    </ligand>
</feature>
<feature type="binding site" evidence="1">
    <location>
        <position position="37"/>
    </location>
    <ligand>
        <name>Mg(2+)</name>
        <dbReference type="ChEBI" id="CHEBI:18420"/>
    </ligand>
</feature>
<feature type="binding site" evidence="1">
    <location>
        <begin position="57"/>
        <end position="61"/>
    </location>
    <ligand>
        <name>GTP</name>
        <dbReference type="ChEBI" id="CHEBI:37565"/>
    </ligand>
</feature>
<feature type="binding site" evidence="1">
    <location>
        <position position="59"/>
    </location>
    <ligand>
        <name>Mg(2+)</name>
        <dbReference type="ChEBI" id="CHEBI:18420"/>
    </ligand>
</feature>
<feature type="binding site" evidence="1">
    <location>
        <begin position="95"/>
        <end position="98"/>
    </location>
    <ligand>
        <name>GTP</name>
        <dbReference type="ChEBI" id="CHEBI:37565"/>
    </ligand>
</feature>
<feature type="binding site" evidence="1">
    <location>
        <begin position="162"/>
        <end position="165"/>
    </location>
    <ligand>
        <name>GTP</name>
        <dbReference type="ChEBI" id="CHEBI:37565"/>
    </ligand>
</feature>
<feature type="binding site" evidence="1">
    <location>
        <begin position="192"/>
        <end position="195"/>
    </location>
    <ligand>
        <name>GTP</name>
        <dbReference type="ChEBI" id="CHEBI:37565"/>
    </ligand>
</feature>
<proteinExistence type="inferred from homology"/>
<dbReference type="EMBL" id="AE017226">
    <property type="protein sequence ID" value="AAS13091.1"/>
    <property type="molecule type" value="Genomic_DNA"/>
</dbReference>
<dbReference type="RefSeq" id="NP_973172.1">
    <property type="nucleotide sequence ID" value="NC_002967.9"/>
</dbReference>
<dbReference type="SMR" id="Q73K17"/>
<dbReference type="STRING" id="243275.TDE_2574"/>
<dbReference type="PaxDb" id="243275-TDE_2574"/>
<dbReference type="GeneID" id="2741278"/>
<dbReference type="KEGG" id="tde:TDE_2574"/>
<dbReference type="PATRIC" id="fig|243275.7.peg.2433"/>
<dbReference type="eggNOG" id="COG0218">
    <property type="taxonomic scope" value="Bacteria"/>
</dbReference>
<dbReference type="HOGENOM" id="CLU_033732_3_0_12"/>
<dbReference type="OrthoDB" id="9804921at2"/>
<dbReference type="Proteomes" id="UP000008212">
    <property type="component" value="Chromosome"/>
</dbReference>
<dbReference type="GO" id="GO:0005525">
    <property type="term" value="F:GTP binding"/>
    <property type="evidence" value="ECO:0007669"/>
    <property type="project" value="UniProtKB-UniRule"/>
</dbReference>
<dbReference type="GO" id="GO:0046872">
    <property type="term" value="F:metal ion binding"/>
    <property type="evidence" value="ECO:0007669"/>
    <property type="project" value="UniProtKB-KW"/>
</dbReference>
<dbReference type="GO" id="GO:0000917">
    <property type="term" value="P:division septum assembly"/>
    <property type="evidence" value="ECO:0007669"/>
    <property type="project" value="UniProtKB-KW"/>
</dbReference>
<dbReference type="CDD" id="cd01876">
    <property type="entry name" value="YihA_EngB"/>
    <property type="match status" value="1"/>
</dbReference>
<dbReference type="Gene3D" id="3.40.50.300">
    <property type="entry name" value="P-loop containing nucleotide triphosphate hydrolases"/>
    <property type="match status" value="1"/>
</dbReference>
<dbReference type="HAMAP" id="MF_00321">
    <property type="entry name" value="GTPase_EngB"/>
    <property type="match status" value="1"/>
</dbReference>
<dbReference type="InterPro" id="IPR030393">
    <property type="entry name" value="G_ENGB_dom"/>
</dbReference>
<dbReference type="InterPro" id="IPR006073">
    <property type="entry name" value="GTP-bd"/>
</dbReference>
<dbReference type="InterPro" id="IPR019987">
    <property type="entry name" value="GTP-bd_ribosome_bio_YsxC"/>
</dbReference>
<dbReference type="InterPro" id="IPR027417">
    <property type="entry name" value="P-loop_NTPase"/>
</dbReference>
<dbReference type="NCBIfam" id="TIGR03598">
    <property type="entry name" value="GTPase_YsxC"/>
    <property type="match status" value="1"/>
</dbReference>
<dbReference type="PANTHER" id="PTHR11649:SF13">
    <property type="entry name" value="ENGB-TYPE G DOMAIN-CONTAINING PROTEIN"/>
    <property type="match status" value="1"/>
</dbReference>
<dbReference type="PANTHER" id="PTHR11649">
    <property type="entry name" value="MSS1/TRME-RELATED GTP-BINDING PROTEIN"/>
    <property type="match status" value="1"/>
</dbReference>
<dbReference type="Pfam" id="PF01926">
    <property type="entry name" value="MMR_HSR1"/>
    <property type="match status" value="1"/>
</dbReference>
<dbReference type="SUPFAM" id="SSF52540">
    <property type="entry name" value="P-loop containing nucleoside triphosphate hydrolases"/>
    <property type="match status" value="1"/>
</dbReference>
<dbReference type="PROSITE" id="PS51706">
    <property type="entry name" value="G_ENGB"/>
    <property type="match status" value="1"/>
</dbReference>
<protein>
    <recommendedName>
        <fullName evidence="1">Probable GTP-binding protein EngB</fullName>
    </recommendedName>
</protein>
<accession>Q73K17</accession>
<gene>
    <name evidence="1" type="primary">engB</name>
    <name type="ordered locus">TDE_2574</name>
</gene>
<reference key="1">
    <citation type="journal article" date="2004" name="Proc. Natl. Acad. Sci. U.S.A.">
        <title>Comparison of the genome of the oral pathogen Treponema denticola with other spirochete genomes.</title>
        <authorList>
            <person name="Seshadri R."/>
            <person name="Myers G.S.A."/>
            <person name="Tettelin H."/>
            <person name="Eisen J.A."/>
            <person name="Heidelberg J.F."/>
            <person name="Dodson R.J."/>
            <person name="Davidsen T.M."/>
            <person name="DeBoy R.T."/>
            <person name="Fouts D.E."/>
            <person name="Haft D.H."/>
            <person name="Selengut J."/>
            <person name="Ren Q."/>
            <person name="Brinkac L.M."/>
            <person name="Madupu R."/>
            <person name="Kolonay J.F."/>
            <person name="Durkin S.A."/>
            <person name="Daugherty S.C."/>
            <person name="Shetty J."/>
            <person name="Shvartsbeyn A."/>
            <person name="Gebregeorgis E."/>
            <person name="Geer K."/>
            <person name="Tsegaye G."/>
            <person name="Malek J.A."/>
            <person name="Ayodeji B."/>
            <person name="Shatsman S."/>
            <person name="McLeod M.P."/>
            <person name="Smajs D."/>
            <person name="Howell J.K."/>
            <person name="Pal S."/>
            <person name="Amin A."/>
            <person name="Vashisth P."/>
            <person name="McNeill T.Z."/>
            <person name="Xiang Q."/>
            <person name="Sodergren E."/>
            <person name="Baca E."/>
            <person name="Weinstock G.M."/>
            <person name="Norris S.J."/>
            <person name="Fraser C.M."/>
            <person name="Paulsen I.T."/>
        </authorList>
    </citation>
    <scope>NUCLEOTIDE SEQUENCE [LARGE SCALE GENOMIC DNA]</scope>
    <source>
        <strain>ATCC 35405 / DSM 14222 / CIP 103919 / JCM 8153 / KCTC 15104</strain>
    </source>
</reference>
<name>ENGB_TREDE</name>
<sequence>MKIINAEFIKGAVKAEQFPEIGVSEFAFFGRSNAGKSSLINMLVNRKNLVKTGSRPGMTREVNFFLVNRPASLNFNPKTKKFSGPAPKDMFVLTDLPGYGYAKLSGGMTLQIDKMLYEYCTNRPLLKIIFFLMDMRREPTETEKESIGFFHGLNIEVVIVGTKADKIGKNDQIKAKNDWADFFNFDEELIIISSAAKKTGRDNILSLIAKRI</sequence>
<evidence type="ECO:0000255" key="1">
    <source>
        <dbReference type="HAMAP-Rule" id="MF_00321"/>
    </source>
</evidence>
<comment type="function">
    <text evidence="1">Necessary for normal cell division and for the maintenance of normal septation.</text>
</comment>
<comment type="cofactor">
    <cofactor evidence="1">
        <name>Mg(2+)</name>
        <dbReference type="ChEBI" id="CHEBI:18420"/>
    </cofactor>
</comment>
<comment type="similarity">
    <text evidence="1">Belongs to the TRAFAC class TrmE-Era-EngA-EngB-Septin-like GTPase superfamily. EngB GTPase family.</text>
</comment>
<organism>
    <name type="scientific">Treponema denticola (strain ATCC 35405 / DSM 14222 / CIP 103919 / JCM 8153 / KCTC 15104)</name>
    <dbReference type="NCBI Taxonomy" id="243275"/>
    <lineage>
        <taxon>Bacteria</taxon>
        <taxon>Pseudomonadati</taxon>
        <taxon>Spirochaetota</taxon>
        <taxon>Spirochaetia</taxon>
        <taxon>Spirochaetales</taxon>
        <taxon>Treponemataceae</taxon>
        <taxon>Treponema</taxon>
    </lineage>
</organism>
<keyword id="KW-0131">Cell cycle</keyword>
<keyword id="KW-0132">Cell division</keyword>
<keyword id="KW-0342">GTP-binding</keyword>
<keyword id="KW-0460">Magnesium</keyword>
<keyword id="KW-0479">Metal-binding</keyword>
<keyword id="KW-0547">Nucleotide-binding</keyword>
<keyword id="KW-1185">Reference proteome</keyword>
<keyword id="KW-0717">Septation</keyword>